<proteinExistence type="inferred from homology"/>
<gene>
    <name evidence="1" type="primary">nfuA</name>
    <name type="ordered locus">Shewmr7_3880</name>
</gene>
<evidence type="ECO:0000255" key="1">
    <source>
        <dbReference type="HAMAP-Rule" id="MF_01637"/>
    </source>
</evidence>
<organism>
    <name type="scientific">Shewanella sp. (strain MR-7)</name>
    <dbReference type="NCBI Taxonomy" id="60481"/>
    <lineage>
        <taxon>Bacteria</taxon>
        <taxon>Pseudomonadati</taxon>
        <taxon>Pseudomonadota</taxon>
        <taxon>Gammaproteobacteria</taxon>
        <taxon>Alteromonadales</taxon>
        <taxon>Shewanellaceae</taxon>
        <taxon>Shewanella</taxon>
    </lineage>
</organism>
<name>NFUA_SHESR</name>
<feature type="chain" id="PRO_0000268242" description="Fe/S biogenesis protein NfuA">
    <location>
        <begin position="1"/>
        <end position="192"/>
    </location>
</feature>
<feature type="binding site" evidence="1">
    <location>
        <position position="149"/>
    </location>
    <ligand>
        <name>[4Fe-4S] cluster</name>
        <dbReference type="ChEBI" id="CHEBI:49883"/>
    </ligand>
</feature>
<feature type="binding site" evidence="1">
    <location>
        <position position="152"/>
    </location>
    <ligand>
        <name>[4Fe-4S] cluster</name>
        <dbReference type="ChEBI" id="CHEBI:49883"/>
    </ligand>
</feature>
<keyword id="KW-0004">4Fe-4S</keyword>
<keyword id="KW-0408">Iron</keyword>
<keyword id="KW-0411">Iron-sulfur</keyword>
<keyword id="KW-0479">Metal-binding</keyword>
<accession>Q0HPU8</accession>
<comment type="function">
    <text evidence="1">Involved in iron-sulfur cluster biogenesis. Binds a 4Fe-4S cluster, can transfer this cluster to apoproteins, and thereby intervenes in the maturation of Fe/S proteins. Could also act as a scaffold/chaperone for damaged Fe/S proteins.</text>
</comment>
<comment type="cofactor">
    <cofactor evidence="1">
        <name>[4Fe-4S] cluster</name>
        <dbReference type="ChEBI" id="CHEBI:49883"/>
    </cofactor>
    <text evidence="1">Binds 1 [4Fe-4S] cluster per subunit. The cluster is presumably bound at the interface of two monomers.</text>
</comment>
<comment type="subunit">
    <text evidence="1">Homodimer.</text>
</comment>
<comment type="similarity">
    <text evidence="1">Belongs to the NfuA family.</text>
</comment>
<sequence length="192" mass="20649">MITISDAAQAHFVKLLADQPEGTHIRVFVISPGTAQAECGVSYCPPDAVESDDIELEFNGFSAMVDEKSAPFLEEASIDFVTDQLGSQLTLKAPNAKMRKVSSDAPLAERVEYVIQSEINPQLASHGGNIMLVEITQEGVAVLQFGGGCNGCSQVDITLKDGIEKQLLDMFPGELTGVRDVTDHQHGEHSYA</sequence>
<dbReference type="EMBL" id="CP000444">
    <property type="protein sequence ID" value="ABI44857.1"/>
    <property type="molecule type" value="Genomic_DNA"/>
</dbReference>
<dbReference type="SMR" id="Q0HPU8"/>
<dbReference type="KEGG" id="shm:Shewmr7_3880"/>
<dbReference type="HOGENOM" id="CLU_094569_0_0_6"/>
<dbReference type="GO" id="GO:0051539">
    <property type="term" value="F:4 iron, 4 sulfur cluster binding"/>
    <property type="evidence" value="ECO:0007669"/>
    <property type="project" value="UniProtKB-UniRule"/>
</dbReference>
<dbReference type="GO" id="GO:0005506">
    <property type="term" value="F:iron ion binding"/>
    <property type="evidence" value="ECO:0007669"/>
    <property type="project" value="InterPro"/>
</dbReference>
<dbReference type="GO" id="GO:0016226">
    <property type="term" value="P:iron-sulfur cluster assembly"/>
    <property type="evidence" value="ECO:0007669"/>
    <property type="project" value="UniProtKB-UniRule"/>
</dbReference>
<dbReference type="GO" id="GO:0051604">
    <property type="term" value="P:protein maturation"/>
    <property type="evidence" value="ECO:0007669"/>
    <property type="project" value="UniProtKB-UniRule"/>
</dbReference>
<dbReference type="Gene3D" id="3.30.300.130">
    <property type="entry name" value="Fe-S cluster assembly (FSCA)"/>
    <property type="match status" value="1"/>
</dbReference>
<dbReference type="Gene3D" id="2.60.300.12">
    <property type="entry name" value="HesB-like domain"/>
    <property type="match status" value="1"/>
</dbReference>
<dbReference type="HAMAP" id="MF_01637">
    <property type="entry name" value="Fe_S_biogen_NfuA"/>
    <property type="match status" value="1"/>
</dbReference>
<dbReference type="InterPro" id="IPR017726">
    <property type="entry name" value="Fe/S_biogenesis_protein_NfuA"/>
</dbReference>
<dbReference type="InterPro" id="IPR000361">
    <property type="entry name" value="FeS_biogenesis"/>
</dbReference>
<dbReference type="InterPro" id="IPR034904">
    <property type="entry name" value="FSCA_dom_sf"/>
</dbReference>
<dbReference type="InterPro" id="IPR035903">
    <property type="entry name" value="HesB-like_dom_sf"/>
</dbReference>
<dbReference type="InterPro" id="IPR001075">
    <property type="entry name" value="NIF_FeS_clus_asmbl_NifU_C"/>
</dbReference>
<dbReference type="NCBIfam" id="NF008392">
    <property type="entry name" value="PRK11190.1"/>
    <property type="match status" value="1"/>
</dbReference>
<dbReference type="NCBIfam" id="TIGR03341">
    <property type="entry name" value="YhgI_GntY"/>
    <property type="match status" value="1"/>
</dbReference>
<dbReference type="PANTHER" id="PTHR11178:SF51">
    <property type="entry name" value="FE_S BIOGENESIS PROTEIN NFUA"/>
    <property type="match status" value="1"/>
</dbReference>
<dbReference type="PANTHER" id="PTHR11178">
    <property type="entry name" value="IRON-SULFUR CLUSTER SCAFFOLD PROTEIN NFU-RELATED"/>
    <property type="match status" value="1"/>
</dbReference>
<dbReference type="Pfam" id="PF01521">
    <property type="entry name" value="Fe-S_biosyn"/>
    <property type="match status" value="1"/>
</dbReference>
<dbReference type="Pfam" id="PF01106">
    <property type="entry name" value="NifU"/>
    <property type="match status" value="1"/>
</dbReference>
<dbReference type="SUPFAM" id="SSF117916">
    <property type="entry name" value="Fe-S cluster assembly (FSCA) domain-like"/>
    <property type="match status" value="1"/>
</dbReference>
<dbReference type="SUPFAM" id="SSF89360">
    <property type="entry name" value="HesB-like domain"/>
    <property type="match status" value="1"/>
</dbReference>
<protein>
    <recommendedName>
        <fullName evidence="1">Fe/S biogenesis protein NfuA</fullName>
    </recommendedName>
</protein>
<reference key="1">
    <citation type="submission" date="2006-08" db="EMBL/GenBank/DDBJ databases">
        <title>Complete sequence of chromosome 1 of Shewanella sp. MR-7.</title>
        <authorList>
            <person name="Copeland A."/>
            <person name="Lucas S."/>
            <person name="Lapidus A."/>
            <person name="Barry K."/>
            <person name="Detter J.C."/>
            <person name="Glavina del Rio T."/>
            <person name="Hammon N."/>
            <person name="Israni S."/>
            <person name="Dalin E."/>
            <person name="Tice H."/>
            <person name="Pitluck S."/>
            <person name="Kiss H."/>
            <person name="Brettin T."/>
            <person name="Bruce D."/>
            <person name="Han C."/>
            <person name="Tapia R."/>
            <person name="Gilna P."/>
            <person name="Schmutz J."/>
            <person name="Larimer F."/>
            <person name="Land M."/>
            <person name="Hauser L."/>
            <person name="Kyrpides N."/>
            <person name="Mikhailova N."/>
            <person name="Nealson K."/>
            <person name="Konstantinidis K."/>
            <person name="Klappenbach J."/>
            <person name="Tiedje J."/>
            <person name="Richardson P."/>
        </authorList>
    </citation>
    <scope>NUCLEOTIDE SEQUENCE [LARGE SCALE GENOMIC DNA]</scope>
    <source>
        <strain>MR-7</strain>
    </source>
</reference>